<comment type="function">
    <text>Hydrolysis of 6-phosphogluconolactone to 6-phosphogluconate.</text>
</comment>
<comment type="catalytic activity">
    <reaction>
        <text>6-phospho-D-glucono-1,5-lactone + H2O = 6-phospho-D-gluconate + H(+)</text>
        <dbReference type="Rhea" id="RHEA:12556"/>
        <dbReference type="ChEBI" id="CHEBI:15377"/>
        <dbReference type="ChEBI" id="CHEBI:15378"/>
        <dbReference type="ChEBI" id="CHEBI:57955"/>
        <dbReference type="ChEBI" id="CHEBI:58759"/>
        <dbReference type="EC" id="3.1.1.31"/>
    </reaction>
</comment>
<comment type="pathway">
    <text>Carbohydrate degradation; pentose phosphate pathway; D-ribulose 5-phosphate from D-glucose 6-phosphate (oxidative stage): step 2/3.</text>
</comment>
<comment type="similarity">
    <text evidence="2">Belongs to the glucosamine/galactosamine-6-phosphate isomerase family. 6-phosphogluconolactonase subfamily.</text>
</comment>
<comment type="sequence caution" evidence="2">
    <conflict type="erroneous initiation">
        <sequence resource="EMBL-CDS" id="BAA18726"/>
    </conflict>
</comment>
<keyword id="KW-0903">Direct protein sequencing</keyword>
<keyword id="KW-0378">Hydrolase</keyword>
<keyword id="KW-1185">Reference proteome</keyword>
<evidence type="ECO:0000269" key="1">
    <source>
    </source>
</evidence>
<evidence type="ECO:0000305" key="2"/>
<protein>
    <recommendedName>
        <fullName>6-phosphogluconolactonase</fullName>
        <shortName>6PGL</shortName>
        <ecNumber>3.1.1.31</ecNumber>
    </recommendedName>
</protein>
<gene>
    <name type="primary">pgl</name>
    <name type="synonym">devB</name>
    <name type="ordered locus">sll1479</name>
</gene>
<feature type="initiator methionine" description="Removed" evidence="1">
    <location>
        <position position="1"/>
    </location>
</feature>
<feature type="chain" id="PRO_0000090107" description="6-phosphogluconolactonase">
    <location>
        <begin position="2"/>
        <end position="240"/>
    </location>
</feature>
<organism>
    <name type="scientific">Synechocystis sp. (strain ATCC 27184 / PCC 6803 / Kazusa)</name>
    <dbReference type="NCBI Taxonomy" id="1111708"/>
    <lineage>
        <taxon>Bacteria</taxon>
        <taxon>Bacillati</taxon>
        <taxon>Cyanobacteriota</taxon>
        <taxon>Cyanophyceae</taxon>
        <taxon>Synechococcales</taxon>
        <taxon>Merismopediaceae</taxon>
        <taxon>Synechocystis</taxon>
    </lineage>
</organism>
<reference key="1">
    <citation type="journal article" date="1996" name="DNA Res.">
        <title>Sequence analysis of the genome of the unicellular cyanobacterium Synechocystis sp. strain PCC6803. II. Sequence determination of the entire genome and assignment of potential protein-coding regions.</title>
        <authorList>
            <person name="Kaneko T."/>
            <person name="Sato S."/>
            <person name="Kotani H."/>
            <person name="Tanaka A."/>
            <person name="Asamizu E."/>
            <person name="Nakamura Y."/>
            <person name="Miyajima N."/>
            <person name="Hirosawa M."/>
            <person name="Sugiura M."/>
            <person name="Sasamoto S."/>
            <person name="Kimura T."/>
            <person name="Hosouchi T."/>
            <person name="Matsuno A."/>
            <person name="Muraki A."/>
            <person name="Nakazaki N."/>
            <person name="Naruo K."/>
            <person name="Okumura S."/>
            <person name="Shimpo S."/>
            <person name="Takeuchi C."/>
            <person name="Wada T."/>
            <person name="Watanabe A."/>
            <person name="Yamada M."/>
            <person name="Yasuda M."/>
            <person name="Tabata S."/>
        </authorList>
    </citation>
    <scope>NUCLEOTIDE SEQUENCE [LARGE SCALE GENOMIC DNA]</scope>
    <source>
        <strain>ATCC 27184 / PCC 6803 / Kazusa</strain>
    </source>
</reference>
<reference key="2">
    <citation type="journal article" date="1997" name="Electrophoresis">
        <title>Towards a proteome project of cyanobacterium Synechocystis sp. strain PCC6803: linking 130 protein spots with their respective genes.</title>
        <authorList>
            <person name="Sazuka T."/>
            <person name="Ohara O."/>
        </authorList>
    </citation>
    <scope>PROTEIN SEQUENCE OF 2-20</scope>
</reference>
<dbReference type="EC" id="3.1.1.31"/>
<dbReference type="EMBL" id="BA000022">
    <property type="protein sequence ID" value="BAA18726.1"/>
    <property type="status" value="ALT_INIT"/>
    <property type="molecule type" value="Genomic_DNA"/>
</dbReference>
<dbReference type="PIR" id="S76814">
    <property type="entry name" value="S76814"/>
</dbReference>
<dbReference type="SMR" id="P74618"/>
<dbReference type="STRING" id="1148.gene:10500498"/>
<dbReference type="PaxDb" id="1148-1653815"/>
<dbReference type="EnsemblBacteria" id="BAA18726">
    <property type="protein sequence ID" value="BAA18726"/>
    <property type="gene ID" value="BAA18726"/>
</dbReference>
<dbReference type="KEGG" id="syn:sll1479"/>
<dbReference type="eggNOG" id="COG0363">
    <property type="taxonomic scope" value="Bacteria"/>
</dbReference>
<dbReference type="InParanoid" id="P74618"/>
<dbReference type="PhylomeDB" id="P74618"/>
<dbReference type="UniPathway" id="UPA00115">
    <property type="reaction ID" value="UER00409"/>
</dbReference>
<dbReference type="Proteomes" id="UP000001425">
    <property type="component" value="Chromosome"/>
</dbReference>
<dbReference type="GO" id="GO:0017057">
    <property type="term" value="F:6-phosphogluconolactonase activity"/>
    <property type="evidence" value="ECO:0007669"/>
    <property type="project" value="UniProtKB-EC"/>
</dbReference>
<dbReference type="GO" id="GO:0005975">
    <property type="term" value="P:carbohydrate metabolic process"/>
    <property type="evidence" value="ECO:0007669"/>
    <property type="project" value="InterPro"/>
</dbReference>
<dbReference type="GO" id="GO:0006098">
    <property type="term" value="P:pentose-phosphate shunt"/>
    <property type="evidence" value="ECO:0007669"/>
    <property type="project" value="UniProtKB-UniPathway"/>
</dbReference>
<dbReference type="CDD" id="cd01400">
    <property type="entry name" value="6PGL"/>
    <property type="match status" value="1"/>
</dbReference>
<dbReference type="FunFam" id="3.40.50.1360:FF:000005">
    <property type="entry name" value="6-phosphogluconolactonase"/>
    <property type="match status" value="1"/>
</dbReference>
<dbReference type="Gene3D" id="3.40.50.1360">
    <property type="match status" value="1"/>
</dbReference>
<dbReference type="InterPro" id="IPR005900">
    <property type="entry name" value="6-phosphogluconolactonase_DevB"/>
</dbReference>
<dbReference type="InterPro" id="IPR006148">
    <property type="entry name" value="Glc/Gal-6P_isomerase"/>
</dbReference>
<dbReference type="InterPro" id="IPR037171">
    <property type="entry name" value="NagB/RpiA_transferase-like"/>
</dbReference>
<dbReference type="InterPro" id="IPR039104">
    <property type="entry name" value="PGLS"/>
</dbReference>
<dbReference type="NCBIfam" id="TIGR01198">
    <property type="entry name" value="pgl"/>
    <property type="match status" value="1"/>
</dbReference>
<dbReference type="PANTHER" id="PTHR11054">
    <property type="entry name" value="6-PHOSPHOGLUCONOLACTONASE"/>
    <property type="match status" value="1"/>
</dbReference>
<dbReference type="PANTHER" id="PTHR11054:SF0">
    <property type="entry name" value="6-PHOSPHOGLUCONOLACTONASE"/>
    <property type="match status" value="1"/>
</dbReference>
<dbReference type="Pfam" id="PF01182">
    <property type="entry name" value="Glucosamine_iso"/>
    <property type="match status" value="1"/>
</dbReference>
<dbReference type="SUPFAM" id="SSF100950">
    <property type="entry name" value="NagB/RpiA/CoA transferase-like"/>
    <property type="match status" value="1"/>
</dbReference>
<proteinExistence type="evidence at protein level"/>
<accession>P74618</accession>
<sequence length="240" mass="26482">MAPQVDVLINKQILIERALVCVTTRITKAIAERGQGTIALSGGNTPKPLYEALARQALPWEKIHVFWGDERYVSVDHPDSNQRMARLAWLDQVDIPEANIHPMPTAAADPEQDAQTYENELATFFQVEAGHFPAFDLILLGLGDDGHTASLFPHTPALTVGDRLITVGNKDGQPRLTFTIPLINRARSVVFLVAGASKQHALGEIFAPEADPQQYPARFIQPQGELIWLLDQQAGENLRP</sequence>
<name>6PGL_SYNY3</name>